<organism>
    <name type="scientific">Solanum tuberosum</name>
    <name type="common">Potato</name>
    <dbReference type="NCBI Taxonomy" id="4113"/>
    <lineage>
        <taxon>Eukaryota</taxon>
        <taxon>Viridiplantae</taxon>
        <taxon>Streptophyta</taxon>
        <taxon>Embryophyta</taxon>
        <taxon>Tracheophyta</taxon>
        <taxon>Spermatophyta</taxon>
        <taxon>Magnoliopsida</taxon>
        <taxon>eudicotyledons</taxon>
        <taxon>Gunneridae</taxon>
        <taxon>Pentapetalae</taxon>
        <taxon>asterids</taxon>
        <taxon>lamiids</taxon>
        <taxon>Solanales</taxon>
        <taxon>Solanaceae</taxon>
        <taxon>Solanoideae</taxon>
        <taxon>Solaneae</taxon>
        <taxon>Solanum</taxon>
    </lineage>
</organism>
<comment type="function">
    <text evidence="3">Plant lipoxygenases may be involved in a number of diverse aspects of plant physiology including growth and development, pest resistance, and senescence or responses to wounding. Catalyzes the hydroperoxidation of lipids containing a cis,cis-1,4-pentadiene structure.</text>
</comment>
<comment type="catalytic activity">
    <reaction>
        <text>(9Z,12Z)-octadecadienoate + O2 = (9S)-hydroperoxy-(10E,12Z)-octadecadienoate</text>
        <dbReference type="Rhea" id="RHEA:30291"/>
        <dbReference type="ChEBI" id="CHEBI:15379"/>
        <dbReference type="ChEBI" id="CHEBI:30245"/>
        <dbReference type="ChEBI" id="CHEBI:60955"/>
        <dbReference type="EC" id="1.13.11.58"/>
    </reaction>
</comment>
<comment type="cofactor">
    <cofactor evidence="3">
        <name>Fe cation</name>
        <dbReference type="ChEBI" id="CHEBI:24875"/>
    </cofactor>
    <text evidence="3">Binds 1 Fe cation per subunit. Iron is tightly bound.</text>
</comment>
<comment type="pathway">
    <text evidence="3">Lipid metabolism; oxylipin biosynthesis.</text>
</comment>
<comment type="subunit">
    <text evidence="1">Monomer.</text>
</comment>
<comment type="subcellular location">
    <subcellularLocation>
        <location evidence="3">Cytoplasm</location>
    </subcellularLocation>
</comment>
<comment type="similarity">
    <text evidence="5">Belongs to the lipoxygenase family.</text>
</comment>
<name>LOX18_SOLTU</name>
<feature type="chain" id="PRO_0000412926" description="Probable linoleate 9S-lipoxygenase 8">
    <location>
        <begin position="1"/>
        <end position="861"/>
    </location>
</feature>
<feature type="domain" description="PLAT" evidence="2">
    <location>
        <begin position="33"/>
        <end position="160"/>
    </location>
</feature>
<feature type="domain" description="Lipoxygenase" evidence="3">
    <location>
        <begin position="163"/>
        <end position="861"/>
    </location>
</feature>
<feature type="region of interest" description="Disordered" evidence="4">
    <location>
        <begin position="220"/>
        <end position="245"/>
    </location>
</feature>
<feature type="binding site" evidence="3">
    <location>
        <position position="522"/>
    </location>
    <ligand>
        <name>Fe cation</name>
        <dbReference type="ChEBI" id="CHEBI:24875"/>
        <note>catalytic</note>
    </ligand>
</feature>
<feature type="binding site" evidence="3">
    <location>
        <position position="527"/>
    </location>
    <ligand>
        <name>Fe cation</name>
        <dbReference type="ChEBI" id="CHEBI:24875"/>
        <note>catalytic</note>
    </ligand>
</feature>
<feature type="binding site" evidence="3">
    <location>
        <position position="713"/>
    </location>
    <ligand>
        <name>Fe cation</name>
        <dbReference type="ChEBI" id="CHEBI:24875"/>
        <note>catalytic</note>
    </ligand>
</feature>
<feature type="binding site" evidence="3">
    <location>
        <position position="717"/>
    </location>
    <ligand>
        <name>Fe cation</name>
        <dbReference type="ChEBI" id="CHEBI:24875"/>
        <note>catalytic</note>
    </ligand>
</feature>
<feature type="binding site" evidence="3">
    <location>
        <position position="861"/>
    </location>
    <ligand>
        <name>Fe cation</name>
        <dbReference type="ChEBI" id="CHEBI:24875"/>
        <note>catalytic</note>
    </ligand>
</feature>
<accession>O22508</accession>
<dbReference type="EC" id="1.13.11.58"/>
<dbReference type="EMBL" id="AF019614">
    <property type="protein sequence ID" value="AAB81595.1"/>
    <property type="molecule type" value="mRNA"/>
</dbReference>
<dbReference type="SMR" id="O22508"/>
<dbReference type="FunCoup" id="O22508">
    <property type="interactions" value="87"/>
</dbReference>
<dbReference type="STRING" id="4113.O22508"/>
<dbReference type="InParanoid" id="O22508"/>
<dbReference type="UniPathway" id="UPA00382"/>
<dbReference type="Proteomes" id="UP000011115">
    <property type="component" value="Unassembled WGS sequence"/>
</dbReference>
<dbReference type="ExpressionAtlas" id="O22508">
    <property type="expression patterns" value="baseline and differential"/>
</dbReference>
<dbReference type="GO" id="GO:0005737">
    <property type="term" value="C:cytoplasm"/>
    <property type="evidence" value="ECO:0007669"/>
    <property type="project" value="UniProtKB-SubCell"/>
</dbReference>
<dbReference type="GO" id="GO:1990136">
    <property type="term" value="F:linoleate 9S-lipoxygenase activity"/>
    <property type="evidence" value="ECO:0007669"/>
    <property type="project" value="UniProtKB-EC"/>
</dbReference>
<dbReference type="GO" id="GO:0046872">
    <property type="term" value="F:metal ion binding"/>
    <property type="evidence" value="ECO:0007669"/>
    <property type="project" value="UniProtKB-KW"/>
</dbReference>
<dbReference type="GO" id="GO:0016702">
    <property type="term" value="F:oxidoreductase activity, acting on single donors with incorporation of molecular oxygen, incorporation of two atoms of oxygen"/>
    <property type="evidence" value="ECO:0000318"/>
    <property type="project" value="GO_Central"/>
</dbReference>
<dbReference type="GO" id="GO:0006633">
    <property type="term" value="P:fatty acid biosynthetic process"/>
    <property type="evidence" value="ECO:0007669"/>
    <property type="project" value="UniProtKB-KW"/>
</dbReference>
<dbReference type="GO" id="GO:0034440">
    <property type="term" value="P:lipid oxidation"/>
    <property type="evidence" value="ECO:0000318"/>
    <property type="project" value="GO_Central"/>
</dbReference>
<dbReference type="GO" id="GO:0031408">
    <property type="term" value="P:oxylipin biosynthetic process"/>
    <property type="evidence" value="ECO:0007669"/>
    <property type="project" value="UniProtKB-UniPathway"/>
</dbReference>
<dbReference type="CDD" id="cd01751">
    <property type="entry name" value="PLAT_LH2"/>
    <property type="match status" value="1"/>
</dbReference>
<dbReference type="FunFam" id="1.20.245.10:FF:000002">
    <property type="entry name" value="Lipoxygenase"/>
    <property type="match status" value="1"/>
</dbReference>
<dbReference type="FunFam" id="2.60.60.20:FF:000015">
    <property type="entry name" value="Lipoxygenase"/>
    <property type="match status" value="1"/>
</dbReference>
<dbReference type="FunFam" id="3.10.450.60:FF:000002">
    <property type="entry name" value="Lipoxygenase"/>
    <property type="match status" value="1"/>
</dbReference>
<dbReference type="FunFam" id="4.10.372.10:FF:000001">
    <property type="entry name" value="Lipoxygenase"/>
    <property type="match status" value="1"/>
</dbReference>
<dbReference type="FunFam" id="4.10.375.10:FF:000001">
    <property type="entry name" value="Lipoxygenase"/>
    <property type="match status" value="1"/>
</dbReference>
<dbReference type="Gene3D" id="3.10.450.60">
    <property type="match status" value="1"/>
</dbReference>
<dbReference type="Gene3D" id="4.10.375.10">
    <property type="entry name" value="Lipoxygenase-1, Domain 2"/>
    <property type="match status" value="1"/>
</dbReference>
<dbReference type="Gene3D" id="4.10.372.10">
    <property type="entry name" value="Lipoxygenase-1, Domain 3"/>
    <property type="match status" value="1"/>
</dbReference>
<dbReference type="Gene3D" id="1.20.245.10">
    <property type="entry name" value="Lipoxygenase-1, Domain 5"/>
    <property type="match status" value="1"/>
</dbReference>
<dbReference type="Gene3D" id="2.60.60.20">
    <property type="entry name" value="PLAT/LH2 domain"/>
    <property type="match status" value="1"/>
</dbReference>
<dbReference type="InterPro" id="IPR000907">
    <property type="entry name" value="LipOase"/>
</dbReference>
<dbReference type="InterPro" id="IPR013819">
    <property type="entry name" value="LipOase_C"/>
</dbReference>
<dbReference type="InterPro" id="IPR036226">
    <property type="entry name" value="LipOase_C_sf"/>
</dbReference>
<dbReference type="InterPro" id="IPR020834">
    <property type="entry name" value="LipOase_CS"/>
</dbReference>
<dbReference type="InterPro" id="IPR020833">
    <property type="entry name" value="LipOase_Fe_BS"/>
</dbReference>
<dbReference type="InterPro" id="IPR001246">
    <property type="entry name" value="LipOase_plant"/>
</dbReference>
<dbReference type="InterPro" id="IPR042057">
    <property type="entry name" value="Lipoxy_PLAT/LH2"/>
</dbReference>
<dbReference type="InterPro" id="IPR027433">
    <property type="entry name" value="Lipoxygenase_dom_3"/>
</dbReference>
<dbReference type="InterPro" id="IPR001024">
    <property type="entry name" value="PLAT/LH2_dom"/>
</dbReference>
<dbReference type="InterPro" id="IPR036392">
    <property type="entry name" value="PLAT/LH2_dom_sf"/>
</dbReference>
<dbReference type="PANTHER" id="PTHR11771">
    <property type="entry name" value="LIPOXYGENASE"/>
    <property type="match status" value="1"/>
</dbReference>
<dbReference type="Pfam" id="PF00305">
    <property type="entry name" value="Lipoxygenase"/>
    <property type="match status" value="1"/>
</dbReference>
<dbReference type="Pfam" id="PF01477">
    <property type="entry name" value="PLAT"/>
    <property type="match status" value="1"/>
</dbReference>
<dbReference type="PRINTS" id="PR00087">
    <property type="entry name" value="LIPOXYGENASE"/>
</dbReference>
<dbReference type="PRINTS" id="PR00468">
    <property type="entry name" value="PLTLPOXGNASE"/>
</dbReference>
<dbReference type="SMART" id="SM00308">
    <property type="entry name" value="LH2"/>
    <property type="match status" value="1"/>
</dbReference>
<dbReference type="SUPFAM" id="SSF49723">
    <property type="entry name" value="Lipase/lipooxygenase domain (PLAT/LH2 domain)"/>
    <property type="match status" value="1"/>
</dbReference>
<dbReference type="SUPFAM" id="SSF48484">
    <property type="entry name" value="Lipoxigenase"/>
    <property type="match status" value="1"/>
</dbReference>
<dbReference type="PROSITE" id="PS00711">
    <property type="entry name" value="LIPOXYGENASE_1"/>
    <property type="match status" value="1"/>
</dbReference>
<dbReference type="PROSITE" id="PS00081">
    <property type="entry name" value="LIPOXYGENASE_2"/>
    <property type="match status" value="1"/>
</dbReference>
<dbReference type="PROSITE" id="PS51393">
    <property type="entry name" value="LIPOXYGENASE_3"/>
    <property type="match status" value="1"/>
</dbReference>
<dbReference type="PROSITE" id="PS50095">
    <property type="entry name" value="PLAT"/>
    <property type="match status" value="1"/>
</dbReference>
<proteinExistence type="evidence at transcript level"/>
<protein>
    <recommendedName>
        <fullName>Probable linoleate 9S-lipoxygenase 8</fullName>
        <ecNumber>1.13.11.58</ecNumber>
    </recommendedName>
</protein>
<evidence type="ECO:0000250" key="1"/>
<evidence type="ECO:0000255" key="2">
    <source>
        <dbReference type="PROSITE-ProRule" id="PRU00152"/>
    </source>
</evidence>
<evidence type="ECO:0000255" key="3">
    <source>
        <dbReference type="PROSITE-ProRule" id="PRU00726"/>
    </source>
</evidence>
<evidence type="ECO:0000256" key="4">
    <source>
        <dbReference type="SAM" id="MobiDB-lite"/>
    </source>
</evidence>
<evidence type="ECO:0000305" key="5"/>
<sequence length="861" mass="97020">MIGQITSGLFGGHDDSKKVKGTVVMMNKNVLDFTDLASSLTGKIFDVLGQKVSFQLISSVQGDPTNGLQGKHSNPAYLENSLFTLTPLTAGSETAFGVTFDWNEEFGVPGAFIIKNMHITEFFLKSLTLEDVPNHGKVHFVCNSWVYPSLNYKSDRIFFANQPYLPSETPELLRKYRENELLTLRGDGTGKREAWDRIYDYDIYNDLGNPDQGKENVRTTLGGSAEYPYPRRGRTGRPPTRTDPKVKSRIPLILSLDIYVPRDERFGHLKMSDFLTYALKSIVQFILPELHALFDGTPNEFDSFEDVLRLYEGGIKLPQGPLFKALTAAIPLEMIRELLRTDGEGILRFPTPLVIKDSKTAWRTDEEFAREMLAGVNPIIISRLQEFPPKSKLDPEAYGNQNSTITAEHIEDKLDGLTVDEAMNNNKLFILNHHDVIIPYLRRINTTITKTYASRTLLFLQDNGSLKPLAIELSLPHPDGDQFGVTSKVYTPTDQGVESSIWQLAKAYVAVNDTGVHQLISHWLNTHAVIEPFVIATNRQLSVLHPIHKLLYPHFRDTMNINASARQILVNAGGVLESTVFQSKFAMEMSAVVYKDWVFPDQALPADLVKRGVAVEDSSSPHGVRLLIEDYPYAVDGLEIWSAIKSWVTDYCSFYYGSDEEILKDNELQAWWKELREVGHGDKKNEPWWPEMKTPQELIDSCTTIIWIASALHAAVNFGQYPYAGYLPNRPTVSRRFMPEPGTPEYEELKRNPDKAFLKTITAQLQTLLGVSLVEILSRHTTDEIYLGQRESPEWTKDKEPLAAFDRFGKKLTDIEKQIIQRNGDNILTNRSGPVNAPYTLLFPTSEGGLTGKGIPNSVSI</sequence>
<keyword id="KW-0963">Cytoplasm</keyword>
<keyword id="KW-0223">Dioxygenase</keyword>
<keyword id="KW-0275">Fatty acid biosynthesis</keyword>
<keyword id="KW-0276">Fatty acid metabolism</keyword>
<keyword id="KW-0408">Iron</keyword>
<keyword id="KW-0444">Lipid biosynthesis</keyword>
<keyword id="KW-0443">Lipid metabolism</keyword>
<keyword id="KW-0479">Metal-binding</keyword>
<keyword id="KW-0560">Oxidoreductase</keyword>
<keyword id="KW-0925">Oxylipin biosynthesis</keyword>
<keyword id="KW-1185">Reference proteome</keyword>
<reference key="1">
    <citation type="journal article" date="1998" name="Physiol. Plantarum">
        <title>Characterization of potato tuber lipoxygenase cDNAs and lipoxygenase expression in potato tubers and leaves.</title>
        <authorList>
            <person name="Fidantsef A.L."/>
            <person name="Bostock R.M."/>
        </authorList>
    </citation>
    <scope>NUCLEOTIDE SEQUENCE [MRNA]</scope>
    <source>
        <strain>cv. Lemhi Russet</strain>
        <tissue>Tuber</tissue>
    </source>
</reference>
<gene>
    <name type="primary">LOX1.8</name>
    <name type="synonym">PLOX2</name>
</gene>